<reference key="1">
    <citation type="journal article" date="2009" name="Appl. Environ. Microbiol.">
        <title>Genome analysis of the meat starter culture bacterium Staphylococcus carnosus TM300.</title>
        <authorList>
            <person name="Rosenstein R."/>
            <person name="Nerz C."/>
            <person name="Biswas L."/>
            <person name="Resch A."/>
            <person name="Raddatz G."/>
            <person name="Schuster S.C."/>
            <person name="Goetz F."/>
        </authorList>
    </citation>
    <scope>NUCLEOTIDE SEQUENCE [LARGE SCALE GENOMIC DNA]</scope>
    <source>
        <strain>TM300</strain>
    </source>
</reference>
<name>UPPP_STACT</name>
<feature type="chain" id="PRO_1000148826" description="Undecaprenyl-diphosphatase">
    <location>
        <begin position="1"/>
        <end position="296"/>
    </location>
</feature>
<feature type="transmembrane region" description="Helical" evidence="1">
    <location>
        <begin position="48"/>
        <end position="68"/>
    </location>
</feature>
<feature type="transmembrane region" description="Helical" evidence="1">
    <location>
        <begin position="104"/>
        <end position="124"/>
    </location>
</feature>
<feature type="transmembrane region" description="Helical" evidence="1">
    <location>
        <begin position="131"/>
        <end position="151"/>
    </location>
</feature>
<feature type="transmembrane region" description="Helical" evidence="1">
    <location>
        <begin position="167"/>
        <end position="187"/>
    </location>
</feature>
<feature type="transmembrane region" description="Helical" evidence="1">
    <location>
        <begin position="208"/>
        <end position="228"/>
    </location>
</feature>
<feature type="transmembrane region" description="Helical" evidence="1">
    <location>
        <begin position="237"/>
        <end position="257"/>
    </location>
</feature>
<feature type="transmembrane region" description="Helical" evidence="1">
    <location>
        <begin position="272"/>
        <end position="292"/>
    </location>
</feature>
<comment type="function">
    <text evidence="1">Catalyzes the dephosphorylation of undecaprenyl diphosphate (UPP). Confers resistance to bacitracin.</text>
</comment>
<comment type="catalytic activity">
    <reaction evidence="1">
        <text>di-trans,octa-cis-undecaprenyl diphosphate + H2O = di-trans,octa-cis-undecaprenyl phosphate + phosphate + H(+)</text>
        <dbReference type="Rhea" id="RHEA:28094"/>
        <dbReference type="ChEBI" id="CHEBI:15377"/>
        <dbReference type="ChEBI" id="CHEBI:15378"/>
        <dbReference type="ChEBI" id="CHEBI:43474"/>
        <dbReference type="ChEBI" id="CHEBI:58405"/>
        <dbReference type="ChEBI" id="CHEBI:60392"/>
        <dbReference type="EC" id="3.6.1.27"/>
    </reaction>
</comment>
<comment type="subcellular location">
    <subcellularLocation>
        <location evidence="1">Cell membrane</location>
        <topology evidence="1">Multi-pass membrane protein</topology>
    </subcellularLocation>
</comment>
<comment type="miscellaneous">
    <text>Bacitracin is thought to be involved in the inhibition of peptidoglycan synthesis by sequestering undecaprenyl diphosphate, thereby reducing the pool of lipid carrier available.</text>
</comment>
<comment type="similarity">
    <text evidence="1">Belongs to the UppP family.</text>
</comment>
<dbReference type="EC" id="3.6.1.27" evidence="1"/>
<dbReference type="EMBL" id="AM295250">
    <property type="protein sequence ID" value="CAL27243.1"/>
    <property type="molecule type" value="Genomic_DNA"/>
</dbReference>
<dbReference type="RefSeq" id="WP_015899588.1">
    <property type="nucleotide sequence ID" value="NC_012121.1"/>
</dbReference>
<dbReference type="SMR" id="B9DK59"/>
<dbReference type="GeneID" id="93795259"/>
<dbReference type="KEGG" id="sca:SCA_0330"/>
<dbReference type="eggNOG" id="COG1968">
    <property type="taxonomic scope" value="Bacteria"/>
</dbReference>
<dbReference type="HOGENOM" id="CLU_060296_2_0_9"/>
<dbReference type="OrthoDB" id="9808289at2"/>
<dbReference type="BioCyc" id="SCAR396513:SCA_RS01685-MONOMER"/>
<dbReference type="Proteomes" id="UP000000444">
    <property type="component" value="Chromosome"/>
</dbReference>
<dbReference type="GO" id="GO:0005886">
    <property type="term" value="C:plasma membrane"/>
    <property type="evidence" value="ECO:0007669"/>
    <property type="project" value="UniProtKB-SubCell"/>
</dbReference>
<dbReference type="GO" id="GO:0050380">
    <property type="term" value="F:undecaprenyl-diphosphatase activity"/>
    <property type="evidence" value="ECO:0007669"/>
    <property type="project" value="UniProtKB-UniRule"/>
</dbReference>
<dbReference type="GO" id="GO:0071555">
    <property type="term" value="P:cell wall organization"/>
    <property type="evidence" value="ECO:0007669"/>
    <property type="project" value="UniProtKB-KW"/>
</dbReference>
<dbReference type="GO" id="GO:0009252">
    <property type="term" value="P:peptidoglycan biosynthetic process"/>
    <property type="evidence" value="ECO:0007669"/>
    <property type="project" value="UniProtKB-KW"/>
</dbReference>
<dbReference type="GO" id="GO:0008360">
    <property type="term" value="P:regulation of cell shape"/>
    <property type="evidence" value="ECO:0007669"/>
    <property type="project" value="UniProtKB-KW"/>
</dbReference>
<dbReference type="GO" id="GO:0046677">
    <property type="term" value="P:response to antibiotic"/>
    <property type="evidence" value="ECO:0007669"/>
    <property type="project" value="UniProtKB-UniRule"/>
</dbReference>
<dbReference type="HAMAP" id="MF_01006">
    <property type="entry name" value="Undec_diphosphatase"/>
    <property type="match status" value="1"/>
</dbReference>
<dbReference type="InterPro" id="IPR003824">
    <property type="entry name" value="UppP"/>
</dbReference>
<dbReference type="NCBIfam" id="NF001390">
    <property type="entry name" value="PRK00281.1-4"/>
    <property type="match status" value="1"/>
</dbReference>
<dbReference type="NCBIfam" id="TIGR00753">
    <property type="entry name" value="undec_PP_bacA"/>
    <property type="match status" value="1"/>
</dbReference>
<dbReference type="PANTHER" id="PTHR30622">
    <property type="entry name" value="UNDECAPRENYL-DIPHOSPHATASE"/>
    <property type="match status" value="1"/>
</dbReference>
<dbReference type="PANTHER" id="PTHR30622:SF3">
    <property type="entry name" value="UNDECAPRENYL-DIPHOSPHATASE"/>
    <property type="match status" value="1"/>
</dbReference>
<dbReference type="Pfam" id="PF02673">
    <property type="entry name" value="BacA"/>
    <property type="match status" value="1"/>
</dbReference>
<proteinExistence type="inferred from homology"/>
<protein>
    <recommendedName>
        <fullName evidence="1">Undecaprenyl-diphosphatase</fullName>
        <ecNumber evidence="1">3.6.1.27</ecNumber>
    </recommendedName>
    <alternativeName>
        <fullName evidence="1">Bacitracin resistance protein</fullName>
    </alternativeName>
    <alternativeName>
        <fullName evidence="1">Undecaprenyl pyrophosphate phosphatase</fullName>
    </alternativeName>
</protein>
<keyword id="KW-0046">Antibiotic resistance</keyword>
<keyword id="KW-1003">Cell membrane</keyword>
<keyword id="KW-0133">Cell shape</keyword>
<keyword id="KW-0961">Cell wall biogenesis/degradation</keyword>
<keyword id="KW-0378">Hydrolase</keyword>
<keyword id="KW-0472">Membrane</keyword>
<keyword id="KW-0573">Peptidoglycan synthesis</keyword>
<keyword id="KW-1185">Reference proteome</keyword>
<keyword id="KW-0812">Transmembrane</keyword>
<keyword id="KW-1133">Transmembrane helix</keyword>
<evidence type="ECO:0000255" key="1">
    <source>
        <dbReference type="HAMAP-Rule" id="MF_01006"/>
    </source>
</evidence>
<gene>
    <name evidence="1" type="primary">uppP</name>
    <name type="ordered locus">Sca_0330</name>
</gene>
<sequence length="296" mass="33147">MLLLELLKALILGIVEGLTEFAPVSSTGHMILVDDMWLKSPEFLGSQSAFTFKIVIQLGSVFAAAWVFRKRYFEMLYIGKYQPAATETESADGKIGKRVKPKRLTLWHVLVGMIPAGILGLLFDDVIEKYLFSVPTVMIGLLLGAFYMIFAQKFSERYAHRENIDQITFFQAFVIGLSQAVAMWPGFSRSGSTISTGVLMKMNYKAASDFTFIMAVPIMLAASLLSLVKHIGYIHLSHIPFYIIGFLAAFIFGLLSIRLFLNLINRIKLIPFAIYRIILVIFIAILYFGFGIGKGI</sequence>
<accession>B9DK59</accession>
<organism>
    <name type="scientific">Staphylococcus carnosus (strain TM300)</name>
    <dbReference type="NCBI Taxonomy" id="396513"/>
    <lineage>
        <taxon>Bacteria</taxon>
        <taxon>Bacillati</taxon>
        <taxon>Bacillota</taxon>
        <taxon>Bacilli</taxon>
        <taxon>Bacillales</taxon>
        <taxon>Staphylococcaceae</taxon>
        <taxon>Staphylococcus</taxon>
    </lineage>
</organism>